<feature type="chain" id="PRO_1000187512" description="Chromosome partition protein MukF">
    <location>
        <begin position="1"/>
        <end position="440"/>
    </location>
</feature>
<feature type="region of interest" description="Leucine-zipper">
    <location>
        <begin position="208"/>
        <end position="236"/>
    </location>
</feature>
<keyword id="KW-0106">Calcium</keyword>
<keyword id="KW-0131">Cell cycle</keyword>
<keyword id="KW-0132">Cell division</keyword>
<keyword id="KW-0159">Chromosome partition</keyword>
<keyword id="KW-0963">Cytoplasm</keyword>
<keyword id="KW-0226">DNA condensation</keyword>
<comment type="function">
    <text evidence="1">Involved in chromosome condensation, segregation and cell cycle progression. May participate in facilitating chromosome segregation by condensation DNA from both sides of a centrally located replisome during cell division. Not required for mini-F plasmid partitioning. Probably acts via its interaction with MukB and MukE. Overexpression results in anucleate cells. It has a calcium binding activity.</text>
</comment>
<comment type="subunit">
    <text evidence="1">Interacts, and probably forms a ternary complex, with MukE and MukB via its C-terminal region. The complex formation is stimulated by calcium or magnesium. It is required for an interaction between MukE and MukB.</text>
</comment>
<comment type="subcellular location">
    <subcellularLocation>
        <location evidence="1">Cytoplasm</location>
        <location evidence="1">Nucleoid</location>
    </subcellularLocation>
    <text evidence="1">Restricted to the nucleoid region.</text>
</comment>
<comment type="similarity">
    <text evidence="1">Belongs to the MukF family.</text>
</comment>
<organism>
    <name type="scientific">Salmonella agona (strain SL483)</name>
    <dbReference type="NCBI Taxonomy" id="454166"/>
    <lineage>
        <taxon>Bacteria</taxon>
        <taxon>Pseudomonadati</taxon>
        <taxon>Pseudomonadota</taxon>
        <taxon>Gammaproteobacteria</taxon>
        <taxon>Enterobacterales</taxon>
        <taxon>Enterobacteriaceae</taxon>
        <taxon>Salmonella</taxon>
    </lineage>
</organism>
<evidence type="ECO:0000255" key="1">
    <source>
        <dbReference type="HAMAP-Rule" id="MF_01803"/>
    </source>
</evidence>
<sequence>MSEFSQTVPELVAWARKNDFSISLPVDRLSFLLAVATLNGERLDGEMSEGELVDAFRHVSDAFEQTSETIGVRANNAINDMVRQRLLNRFTSEQAEGNAIYRLTPLGIGITDYYIRQREFSTLRLSMQLSIVAGELKRAADAAAEGGDEFHWHRNVYAPLKYSVAEIFDSIDLTQRIMDEQQQQVKDDIAQLLNKDWRAAISSCELLLSETSGTLRELQDTLEAAGDKLQANLLRIQDATMTHDDLHFVDRLVFDLQSKLDRIISWGQQSIDLWIGYDRHVHKFIRTAIDMDKNRVFAQRLRQSVQTYFDDPWALTYANADRLLDMRDEEMALRDDEVTGELPPDLEYEEFNEIREQLAAIIEEQLAIYKTRQTPLDLGLVVREYLAQYPRARHFDVARIVIDQAVRLGVAQADFTGLPAKWQPINDYGAKVQAHVIDKY</sequence>
<protein>
    <recommendedName>
        <fullName evidence="1">Chromosome partition protein MukF</fullName>
    </recommendedName>
</protein>
<proteinExistence type="inferred from homology"/>
<dbReference type="EMBL" id="CP001138">
    <property type="protein sequence ID" value="ACH48854.1"/>
    <property type="molecule type" value="Genomic_DNA"/>
</dbReference>
<dbReference type="RefSeq" id="WP_001288828.1">
    <property type="nucleotide sequence ID" value="NC_011149.1"/>
</dbReference>
<dbReference type="SMR" id="B5F1S4"/>
<dbReference type="KEGG" id="sea:SeAg_B0998"/>
<dbReference type="HOGENOM" id="CLU_049853_0_0_6"/>
<dbReference type="Proteomes" id="UP000008819">
    <property type="component" value="Chromosome"/>
</dbReference>
<dbReference type="GO" id="GO:0005737">
    <property type="term" value="C:cytoplasm"/>
    <property type="evidence" value="ECO:0007669"/>
    <property type="project" value="UniProtKB-UniRule"/>
</dbReference>
<dbReference type="GO" id="GO:0009295">
    <property type="term" value="C:nucleoid"/>
    <property type="evidence" value="ECO:0007669"/>
    <property type="project" value="UniProtKB-SubCell"/>
</dbReference>
<dbReference type="GO" id="GO:0005509">
    <property type="term" value="F:calcium ion binding"/>
    <property type="evidence" value="ECO:0007669"/>
    <property type="project" value="UniProtKB-UniRule"/>
</dbReference>
<dbReference type="GO" id="GO:0051301">
    <property type="term" value="P:cell division"/>
    <property type="evidence" value="ECO:0007669"/>
    <property type="project" value="UniProtKB-KW"/>
</dbReference>
<dbReference type="GO" id="GO:0030261">
    <property type="term" value="P:chromosome condensation"/>
    <property type="evidence" value="ECO:0007669"/>
    <property type="project" value="UniProtKB-KW"/>
</dbReference>
<dbReference type="GO" id="GO:0007059">
    <property type="term" value="P:chromosome segregation"/>
    <property type="evidence" value="ECO:0007669"/>
    <property type="project" value="UniProtKB-UniRule"/>
</dbReference>
<dbReference type="GO" id="GO:0006260">
    <property type="term" value="P:DNA replication"/>
    <property type="evidence" value="ECO:0007669"/>
    <property type="project" value="UniProtKB-UniRule"/>
</dbReference>
<dbReference type="CDD" id="cd16337">
    <property type="entry name" value="MukF_C"/>
    <property type="match status" value="1"/>
</dbReference>
<dbReference type="CDD" id="cd16335">
    <property type="entry name" value="MukF_N"/>
    <property type="match status" value="1"/>
</dbReference>
<dbReference type="Gene3D" id="1.20.58.590">
    <property type="entry name" value="Chromosome partition protein MukF, middle domain"/>
    <property type="match status" value="1"/>
</dbReference>
<dbReference type="Gene3D" id="1.10.225.40">
    <property type="entry name" value="MukF, C-terminal domain"/>
    <property type="match status" value="1"/>
</dbReference>
<dbReference type="Gene3D" id="1.10.10.10">
    <property type="entry name" value="Winged helix-like DNA-binding domain superfamily/Winged helix DNA-binding domain"/>
    <property type="match status" value="1"/>
</dbReference>
<dbReference type="HAMAP" id="MF_01803">
    <property type="entry name" value="MukF"/>
    <property type="match status" value="1"/>
</dbReference>
<dbReference type="InterPro" id="IPR005582">
    <property type="entry name" value="Chromosome_partition_MukF"/>
</dbReference>
<dbReference type="InterPro" id="IPR033441">
    <property type="entry name" value="MukF_C"/>
</dbReference>
<dbReference type="InterPro" id="IPR038198">
    <property type="entry name" value="MukF_C_sf"/>
</dbReference>
<dbReference type="InterPro" id="IPR033440">
    <property type="entry name" value="MukF_M"/>
</dbReference>
<dbReference type="InterPro" id="IPR036141">
    <property type="entry name" value="MukF_M_sp"/>
</dbReference>
<dbReference type="InterPro" id="IPR033439">
    <property type="entry name" value="MukF_WHTH"/>
</dbReference>
<dbReference type="InterPro" id="IPR036388">
    <property type="entry name" value="WH-like_DNA-bd_sf"/>
</dbReference>
<dbReference type="InterPro" id="IPR036390">
    <property type="entry name" value="WH_DNA-bd_sf"/>
</dbReference>
<dbReference type="NCBIfam" id="NF003615">
    <property type="entry name" value="PRK05260.1"/>
    <property type="match status" value="1"/>
</dbReference>
<dbReference type="Pfam" id="PF03882">
    <property type="entry name" value="KicB"/>
    <property type="match status" value="1"/>
</dbReference>
<dbReference type="Pfam" id="PF17193">
    <property type="entry name" value="MukF_C"/>
    <property type="match status" value="1"/>
</dbReference>
<dbReference type="Pfam" id="PF17192">
    <property type="entry name" value="MukF_M"/>
    <property type="match status" value="1"/>
</dbReference>
<dbReference type="PIRSF" id="PIRSF018282">
    <property type="entry name" value="MukF"/>
    <property type="match status" value="1"/>
</dbReference>
<dbReference type="SUPFAM" id="SSF140570">
    <property type="entry name" value="MukF C-terminal domain-like"/>
    <property type="match status" value="1"/>
</dbReference>
<dbReference type="SUPFAM" id="SSF46785">
    <property type="entry name" value="Winged helix' DNA-binding domain"/>
    <property type="match status" value="1"/>
</dbReference>
<gene>
    <name evidence="1" type="primary">mukF</name>
    <name type="ordered locus">SeAg_B0998</name>
</gene>
<accession>B5F1S4</accession>
<reference key="1">
    <citation type="journal article" date="2011" name="J. Bacteriol.">
        <title>Comparative genomics of 28 Salmonella enterica isolates: evidence for CRISPR-mediated adaptive sublineage evolution.</title>
        <authorList>
            <person name="Fricke W.F."/>
            <person name="Mammel M.K."/>
            <person name="McDermott P.F."/>
            <person name="Tartera C."/>
            <person name="White D.G."/>
            <person name="Leclerc J.E."/>
            <person name="Ravel J."/>
            <person name="Cebula T.A."/>
        </authorList>
    </citation>
    <scope>NUCLEOTIDE SEQUENCE [LARGE SCALE GENOMIC DNA]</scope>
    <source>
        <strain>SL483</strain>
    </source>
</reference>
<name>MUKF_SALA4</name>